<keyword id="KW-0378">Hydrolase</keyword>
<dbReference type="EC" id="3.5.1.4"/>
<dbReference type="EMBL" id="AF136599">
    <property type="protein sequence ID" value="AAF14257.1"/>
    <property type="molecule type" value="Genomic_DNA"/>
</dbReference>
<dbReference type="SMR" id="Q9RQ17"/>
<dbReference type="GO" id="GO:0004040">
    <property type="term" value="F:amidase activity"/>
    <property type="evidence" value="ECO:0007669"/>
    <property type="project" value="UniProtKB-UniRule"/>
</dbReference>
<dbReference type="CDD" id="cd07565">
    <property type="entry name" value="aliphatic_amidase"/>
    <property type="match status" value="1"/>
</dbReference>
<dbReference type="Gene3D" id="3.60.110.10">
    <property type="entry name" value="Carbon-nitrogen hydrolase"/>
    <property type="match status" value="1"/>
</dbReference>
<dbReference type="HAMAP" id="MF_01242">
    <property type="entry name" value="Aliphatic_amidase"/>
    <property type="match status" value="1"/>
</dbReference>
<dbReference type="InterPro" id="IPR050345">
    <property type="entry name" value="Aliph_Amidase/BUP"/>
</dbReference>
<dbReference type="InterPro" id="IPR023719">
    <property type="entry name" value="Aliphatic_amidase"/>
</dbReference>
<dbReference type="InterPro" id="IPR003010">
    <property type="entry name" value="C-N_Hydrolase"/>
</dbReference>
<dbReference type="InterPro" id="IPR036526">
    <property type="entry name" value="C-N_Hydrolase_sf"/>
</dbReference>
<dbReference type="NCBIfam" id="NF009802">
    <property type="entry name" value="PRK13286.1"/>
    <property type="match status" value="1"/>
</dbReference>
<dbReference type="PANTHER" id="PTHR43674:SF14">
    <property type="entry name" value="ALIPHATIC AMIDASE"/>
    <property type="match status" value="1"/>
</dbReference>
<dbReference type="PANTHER" id="PTHR43674">
    <property type="entry name" value="NITRILASE C965.09-RELATED"/>
    <property type="match status" value="1"/>
</dbReference>
<dbReference type="Pfam" id="PF00795">
    <property type="entry name" value="CN_hydrolase"/>
    <property type="match status" value="1"/>
</dbReference>
<dbReference type="SUPFAM" id="SSF56317">
    <property type="entry name" value="Carbon-nitrogen hydrolase"/>
    <property type="match status" value="1"/>
</dbReference>
<dbReference type="PROSITE" id="PS50263">
    <property type="entry name" value="CN_HYDROLASE"/>
    <property type="match status" value="1"/>
</dbReference>
<protein>
    <recommendedName>
        <fullName>Aliphatic amidase</fullName>
        <ecNumber>3.5.1.4</ecNumber>
    </recommendedName>
    <alternativeName>
        <fullName>Acylamide amidohydrolase</fullName>
    </alternativeName>
    <alternativeName>
        <fullName>Wide spectrum amidase</fullName>
    </alternativeName>
</protein>
<reference key="1">
    <citation type="journal article" date="2000" name="Enzyme Microb. Technol.">
        <title>Cloning of a wide-spectrum amidase from Bacillus stearothermophilus BR388 in Escherichia coli and marked enhancement of amidase expression using directed evolution.</title>
        <authorList>
            <person name="Cheong T.K."/>
            <person name="Oriel P.J."/>
        </authorList>
    </citation>
    <scope>NUCLEOTIDE SEQUENCE [GENOMIC DNA]</scope>
    <scope>FUNCTION</scope>
    <scope>CATALYTIC ACTIVITY</scope>
    <scope>BIOPHYSICOCHEMICAL PROPERTIES</scope>
    <scope>MUTAGENESIS OF HIS-26</scope>
    <source>
        <strain>BR388</strain>
    </source>
</reference>
<accession>Q9RQ17</accession>
<organism>
    <name type="scientific">Geobacillus stearothermophilus</name>
    <name type="common">Bacillus stearothermophilus</name>
    <dbReference type="NCBI Taxonomy" id="1422"/>
    <lineage>
        <taxon>Bacteria</taxon>
        <taxon>Bacillati</taxon>
        <taxon>Bacillota</taxon>
        <taxon>Bacilli</taxon>
        <taxon>Bacillales</taxon>
        <taxon>Anoxybacillaceae</taxon>
        <taxon>Geobacillus</taxon>
    </lineage>
</organism>
<comment type="function">
    <text evidence="3">Catalyzes the hydrolysis of short-chain aliphatic amides to their corresponding organic acids with release of ammonia. Efficiently hydrolyzes propionamide, acetamide and acrylamide, but shows a very weak activity with aromatic and longer chain aliphatic amides.</text>
</comment>
<comment type="function">
    <text evidence="1">Also exhibits in vitro acyl transferase activity, transferring the acyl moiety of short-chain amides to hydroxylamine to form hydroxamates.</text>
</comment>
<comment type="catalytic activity">
    <reaction evidence="3">
        <text>a monocarboxylic acid amide + H2O = a monocarboxylate + NH4(+)</text>
        <dbReference type="Rhea" id="RHEA:12020"/>
        <dbReference type="ChEBI" id="CHEBI:15377"/>
        <dbReference type="ChEBI" id="CHEBI:28938"/>
        <dbReference type="ChEBI" id="CHEBI:35757"/>
        <dbReference type="ChEBI" id="CHEBI:83628"/>
        <dbReference type="EC" id="3.5.1.4"/>
    </reaction>
</comment>
<comment type="biophysicochemical properties">
    <phDependence>
        <text evidence="3">Optimum pH is 7.</text>
    </phDependence>
    <temperatureDependence>
        <text evidence="3">Optimum temperature is 55 degrees Celsius.</text>
    </temperatureDependence>
</comment>
<comment type="similarity">
    <text evidence="4">Belongs to the carbon-nitrogen hydrolase superfamily. Aliphatic amidase family.</text>
</comment>
<feature type="chain" id="PRO_0000204056" description="Aliphatic amidase">
    <location>
        <begin position="1"/>
        <end position="348"/>
    </location>
</feature>
<feature type="domain" description="CN hydrolase" evidence="2">
    <location>
        <begin position="13"/>
        <end position="260"/>
    </location>
</feature>
<feature type="active site" description="Proton acceptor" evidence="1">
    <location>
        <position position="59"/>
    </location>
</feature>
<feature type="active site" description="Proton donor" evidence="1">
    <location>
        <position position="134"/>
    </location>
</feature>
<feature type="active site" description="Nucleophile" evidence="1">
    <location>
        <position position="166"/>
    </location>
</feature>
<feature type="mutagenesis site" description="23-fold increase in activity due to increase in amidase gene transcription." evidence="3">
    <original>H</original>
    <variation>R</variation>
    <location>
        <position position="26"/>
    </location>
</feature>
<name>AMIE_GEOSE</name>
<proteinExistence type="evidence at protein level"/>
<evidence type="ECO:0000250" key="1"/>
<evidence type="ECO:0000255" key="2">
    <source>
        <dbReference type="PROSITE-ProRule" id="PRU00054"/>
    </source>
</evidence>
<evidence type="ECO:0000269" key="3">
    <source>
    </source>
</evidence>
<evidence type="ECO:0000305" key="4"/>
<sequence>MRHGDISSSHDTVGVAVVNYKMPRLHTKKEVIENAKNIANMIVGMKQGLPGMDLVIFPEYSTMGIMYDRKEMFETATTIPGPETEIFAEACRKANTWGVFSLTGEQHEEHPHKNPYNTLVLINNKGEIVQKYRKIIPWCPIEGWYPGDTTYVTEGPKGIKISLIICDDGNYPEIWRDCAMKGAELIVRCQGYMYPAKEQQIMMAKTMAWANNVYVAVANATGFDGVYSYFGHSAIIGFDGRTLGECGEEENGIQYAEISLSQIRDFRQNAQSQNHLFKLLHRGYTGIIQSGEGDKGVAECPFDFYRTWVMDAEKARENVEKITRTTIGTAECPIEGIPHEGKEKEASV</sequence>